<protein>
    <recommendedName>
        <fullName evidence="6">Uridylate cyclase</fullName>
        <ecNumber evidence="4">4.6.1.26</ecNumber>
    </recommendedName>
    <alternativeName>
        <fullName evidence="5">Adenylyl cyclase-like protein</fullName>
        <shortName evidence="5">PaAClp</shortName>
    </alternativeName>
    <alternativeName>
        <fullName>Cyclic UMP synthase</fullName>
        <shortName evidence="6">cUMP synthase</shortName>
    </alternativeName>
    <alternativeName>
        <fullName evidence="6">PaPycC</fullName>
    </alternativeName>
</protein>
<feature type="chain" id="PRO_0000455225" description="Uridylate cyclase">
    <location>
        <begin position="1"/>
        <end position="514"/>
    </location>
</feature>
<feature type="domain" description="Guanylate cyclase 1" evidence="1">
    <location>
        <begin position="49"/>
        <end position="190"/>
    </location>
</feature>
<feature type="domain" description="Guanylate cyclase 2" evidence="1">
    <location>
        <begin position="286"/>
        <end position="428"/>
    </location>
</feature>
<feature type="region of interest" description="Disordered" evidence="2">
    <location>
        <begin position="495"/>
        <end position="514"/>
    </location>
</feature>
<feature type="compositionally biased region" description="Basic and acidic residues" evidence="2">
    <location>
        <begin position="496"/>
        <end position="514"/>
    </location>
</feature>
<feature type="binding site" evidence="3 9 10">
    <location>
        <position position="52"/>
    </location>
    <ligand>
        <name>a ribonucleoside 5'-triphosphate</name>
        <dbReference type="ChEBI" id="CHEBI:61557"/>
    </ligand>
</feature>
<feature type="binding site" evidence="3 9 10">
    <location>
        <position position="105"/>
    </location>
    <ligand>
        <name>a ribonucleoside 5'-triphosphate</name>
        <dbReference type="ChEBI" id="CHEBI:61557"/>
    </ligand>
</feature>
<feature type="binding site" evidence="3 10">
    <location>
        <position position="178"/>
    </location>
    <ligand>
        <name>a ribonucleoside 5'-triphosphate</name>
        <dbReference type="ChEBI" id="CHEBI:61557"/>
    </ligand>
</feature>
<feature type="binding site" evidence="3 10">
    <location>
        <begin position="184"/>
        <end position="188"/>
    </location>
    <ligand>
        <name>a ribonucleoside 5'-triphosphate</name>
        <dbReference type="ChEBI" id="CHEBI:61557"/>
    </ligand>
</feature>
<feature type="binding site" evidence="3 10">
    <location>
        <begin position="291"/>
        <end position="296"/>
    </location>
    <ligand>
        <name>a ribonucleoside 5'-triphosphate</name>
        <dbReference type="ChEBI" id="CHEBI:61557"/>
    </ligand>
</feature>
<feature type="binding site" evidence="3 10">
    <location>
        <position position="291"/>
    </location>
    <ligand>
        <name>Ca(2+)</name>
        <dbReference type="ChEBI" id="CHEBI:29108"/>
    </ligand>
</feature>
<feature type="binding site" evidence="3 10">
    <location>
        <position position="291"/>
    </location>
    <ligand>
        <name>Mn(2+)</name>
        <dbReference type="ChEBI" id="CHEBI:29035"/>
    </ligand>
</feature>
<feature type="binding site" evidence="3 10">
    <location>
        <position position="292"/>
    </location>
    <ligand>
        <name>Ca(2+)</name>
        <dbReference type="ChEBI" id="CHEBI:29108"/>
    </ligand>
</feature>
<feature type="binding site" evidence="3 10">
    <location>
        <position position="339"/>
    </location>
    <ligand>
        <name>Ca(2+)</name>
        <dbReference type="ChEBI" id="CHEBI:29108"/>
    </ligand>
</feature>
<feature type="helix" evidence="11">
    <location>
        <begin position="7"/>
        <end position="20"/>
    </location>
</feature>
<feature type="strand" evidence="11">
    <location>
        <begin position="25"/>
        <end position="28"/>
    </location>
</feature>
<feature type="strand" evidence="11">
    <location>
        <begin position="42"/>
        <end position="55"/>
    </location>
</feature>
<feature type="helix" evidence="11">
    <location>
        <begin position="58"/>
        <end position="62"/>
    </location>
</feature>
<feature type="strand" evidence="11">
    <location>
        <begin position="64"/>
        <end position="67"/>
    </location>
</feature>
<feature type="helix" evidence="11">
    <location>
        <begin position="70"/>
        <end position="94"/>
    </location>
</feature>
<feature type="strand" evidence="11">
    <location>
        <begin position="97"/>
        <end position="102"/>
    </location>
</feature>
<feature type="strand" evidence="11">
    <location>
        <begin position="105"/>
        <end position="110"/>
    </location>
</feature>
<feature type="helix" evidence="11">
    <location>
        <begin position="120"/>
        <end position="139"/>
    </location>
</feature>
<feature type="helix" evidence="11">
    <location>
        <begin position="145"/>
        <end position="147"/>
    </location>
</feature>
<feature type="strand" evidence="11">
    <location>
        <begin position="154"/>
        <end position="167"/>
    </location>
</feature>
<feature type="helix" evidence="11">
    <location>
        <begin position="171"/>
        <end position="173"/>
    </location>
</feature>
<feature type="strand" evidence="11">
    <location>
        <begin position="175"/>
        <end position="180"/>
    </location>
</feature>
<feature type="helix" evidence="11">
    <location>
        <begin position="181"/>
        <end position="191"/>
    </location>
</feature>
<feature type="strand" evidence="11">
    <location>
        <begin position="192"/>
        <end position="194"/>
    </location>
</feature>
<feature type="strand" evidence="11">
    <location>
        <begin position="197"/>
        <end position="200"/>
    </location>
</feature>
<feature type="helix" evidence="11">
    <location>
        <begin position="202"/>
        <end position="207"/>
    </location>
</feature>
<feature type="helix" evidence="11">
    <location>
        <begin position="216"/>
        <end position="218"/>
    </location>
</feature>
<feature type="helix" evidence="11">
    <location>
        <begin position="223"/>
        <end position="233"/>
    </location>
</feature>
<feature type="helix" evidence="11">
    <location>
        <begin position="239"/>
        <end position="252"/>
    </location>
</feature>
<feature type="helix" evidence="11">
    <location>
        <begin position="267"/>
        <end position="269"/>
    </location>
</feature>
<feature type="helix" evidence="11">
    <location>
        <begin position="272"/>
        <end position="274"/>
    </location>
</feature>
<feature type="strand" evidence="11">
    <location>
        <begin position="279"/>
        <end position="293"/>
    </location>
</feature>
<feature type="helix" evidence="11">
    <location>
        <begin position="295"/>
        <end position="301"/>
    </location>
</feature>
<feature type="strand" evidence="11">
    <location>
        <begin position="303"/>
        <end position="306"/>
    </location>
</feature>
<feature type="helix" evidence="11">
    <location>
        <begin position="307"/>
        <end position="326"/>
    </location>
</feature>
<feature type="turn" evidence="11">
    <location>
        <begin position="327"/>
        <end position="329"/>
    </location>
</feature>
<feature type="strand" evidence="11">
    <location>
        <begin position="332"/>
        <end position="337"/>
    </location>
</feature>
<feature type="strand" evidence="11">
    <location>
        <begin position="340"/>
        <end position="345"/>
    </location>
</feature>
<feature type="helix" evidence="11">
    <location>
        <begin position="355"/>
        <end position="382"/>
    </location>
</feature>
<feature type="strand" evidence="11">
    <location>
        <begin position="391"/>
        <end position="408"/>
    </location>
</feature>
<feature type="strand" evidence="11">
    <location>
        <begin position="413"/>
        <end position="417"/>
    </location>
</feature>
<feature type="helix" evidence="11">
    <location>
        <begin position="419"/>
        <end position="429"/>
    </location>
</feature>
<feature type="strand" evidence="11">
    <location>
        <begin position="435"/>
        <end position="438"/>
    </location>
</feature>
<feature type="helix" evidence="11">
    <location>
        <begin position="440"/>
        <end position="445"/>
    </location>
</feature>
<feature type="helix" evidence="11">
    <location>
        <begin position="448"/>
        <end position="454"/>
    </location>
</feature>
<feature type="turn" evidence="11">
    <location>
        <begin position="455"/>
        <end position="458"/>
    </location>
</feature>
<feature type="strand" evidence="11">
    <location>
        <begin position="459"/>
        <end position="462"/>
    </location>
</feature>
<feature type="helix" evidence="11">
    <location>
        <begin position="465"/>
        <end position="471"/>
    </location>
</feature>
<reference key="1">
    <citation type="submission" date="2015-03" db="EMBL/GenBank/DDBJ databases">
        <authorList>
            <person name="Weiser R."/>
        </authorList>
    </citation>
    <scope>NUCLEOTIDE SEQUENCE [LARGE SCALE GENOMIC DNA]</scope>
    <source>
        <strain>RW93</strain>
    </source>
</reference>
<reference key="2">
    <citation type="journal article" date="2021" name="Cell">
        <title>Cyclic CMP and cyclic UMP mediate bacterial immunity against phages.</title>
        <authorList>
            <person name="Tal N."/>
            <person name="Morehouse B.R."/>
            <person name="Millman A."/>
            <person name="Stokar-Avihail A."/>
            <person name="Avraham C."/>
            <person name="Fedorenko T."/>
            <person name="Yirmiya E."/>
            <person name="Herbst E."/>
            <person name="Brandis A."/>
            <person name="Mehlman T."/>
            <person name="Oppenheimer-Shaanan Y."/>
            <person name="Keszei A.F.A."/>
            <person name="Shao S."/>
            <person name="Amitai G."/>
            <person name="Kranzusch P.J."/>
            <person name="Sorek R."/>
        </authorList>
    </citation>
    <scope>FUNCTION</scope>
    <scope>CATALYTIC ACTIVITY</scope>
    <scope>CLASSIFICATION</scope>
    <source>
        <strain>RW93</strain>
    </source>
</reference>
<reference evidence="10" key="3">
    <citation type="journal article" date="2020" name="J. Struct. Biol.">
        <title>Crystal structure of a class III adenylyl cyclase-like ATP-binding protein from Pseudomonas aeruginosa.</title>
        <authorList>
            <person name="Linder J."/>
            <person name="Hupfeld E."/>
            <person name="Weyand M."/>
            <person name="Steegborn C."/>
            <person name="Moniot S."/>
        </authorList>
    </citation>
    <scope>X-RAY CRYSTALLOGRAPHY (1.44 ANGSTROMS) IN COMPLEX WITH NTP; MANGANESE AND CALCIUM</scope>
    <scope>COFACTOR</scope>
    <scope>SUBUNIT</scope>
    <scope>DOMAIN</scope>
    <scope>NUCLEOTIDE-BINDING</scope>
</reference>
<name>PYCC_PSEAI</name>
<comment type="function">
    <text evidence="9">Pycsar (pyrimidine cyclase system for antiphage resistance) provides immunity against bacteriophage. The pyrimidine cyclase (PycC) synthesizes cyclic nucleotides in response to infection; these serve as specific second messenger signals. The signals activate the adjacent effector, leading to bacterial cell death and abortive phage infection. A clade A Pycsar system.</text>
</comment>
<comment type="function">
    <text evidence="3 4 9">The pyrimidine cyclase gene of a two-gene Pycsar system, generates cyclic UMP (cUMP) from UTP, has little to no activity on ATP, CTP or GTP (PubMed:34644530). Expression of this and adjacent effector PaPycTIR (AC P0DV41) probably confers resistance to bacteriophage. The genes are probably only expressed in response to bacteriophage infection (Probable). Does not have adenylyl or guanylyl cyclase activity (PubMed:32454240).</text>
</comment>
<comment type="catalytic activity">
    <reaction evidence="4">
        <text>UTP = 3',5'-cyclic UMP + diphosphate</text>
        <dbReference type="Rhea" id="RHEA:69603"/>
        <dbReference type="ChEBI" id="CHEBI:33019"/>
        <dbReference type="ChEBI" id="CHEBI:46398"/>
        <dbReference type="ChEBI" id="CHEBI:184387"/>
        <dbReference type="EC" id="4.6.1.26"/>
    </reaction>
</comment>
<comment type="cofactor">
    <cofactor evidence="3">
        <name>a divalent metal cation</name>
        <dbReference type="ChEBI" id="CHEBI:60240"/>
    </cofactor>
    <text evidence="3 4 10">When crystallized with (non-physiological) ATP it binds both Ca(2+) and Mn(2+) (PubMed:32454240). The enzyme assay showing cUMP synthase activity has Mn(2+) and Mg(2+) (PubMed:34644530).</text>
</comment>
<comment type="subunit">
    <text evidence="8">Monomer.</text>
</comment>
<comment type="subcellular location">
    <subcellularLocation>
        <location evidence="7">Cytoplasm</location>
    </subcellularLocation>
</comment>
<comment type="domain">
    <text evidence="3">The 2 guanylate cyclase domains fold into a pseudo-dimeric structure; the second domain binds metal while the first provides most of the nucleotide-binding residues.</text>
</comment>
<comment type="similarity">
    <text evidence="9">Belongs to the adenylyl cyclase class-4/guanylyl cyclase family. Pyrimidine cyclase subfamily.</text>
</comment>
<proteinExistence type="evidence at protein level"/>
<organism>
    <name type="scientific">Pseudomonas aeruginosa</name>
    <dbReference type="NCBI Taxonomy" id="287"/>
    <lineage>
        <taxon>Bacteria</taxon>
        <taxon>Pseudomonadati</taxon>
        <taxon>Pseudomonadota</taxon>
        <taxon>Gammaproteobacteria</taxon>
        <taxon>Pseudomonadales</taxon>
        <taxon>Pseudomonadaceae</taxon>
        <taxon>Pseudomonas</taxon>
    </lineage>
</organism>
<gene>
    <name evidence="6" type="primary">pycC</name>
    <name type="ORF">Ga0130373_10433</name>
</gene>
<keyword id="KW-0002">3D-structure</keyword>
<keyword id="KW-0051">Antiviral defense</keyword>
<keyword id="KW-0106">Calcium</keyword>
<keyword id="KW-0963">Cytoplasm</keyword>
<keyword id="KW-0456">Lyase</keyword>
<keyword id="KW-0464">Manganese</keyword>
<keyword id="KW-0479">Metal-binding</keyword>
<keyword id="KW-0547">Nucleotide-binding</keyword>
<keyword id="KW-0677">Repeat</keyword>
<dbReference type="EC" id="4.6.1.26" evidence="4"/>
<dbReference type="EMBL" id="CUYG01000043">
    <property type="status" value="NOT_ANNOTATED_CDS"/>
    <property type="molecule type" value="Genomic_DNA"/>
</dbReference>
<dbReference type="RefSeq" id="WP_003127475.1">
    <property type="nucleotide sequence ID" value="NZ_WUAD01000002.1"/>
</dbReference>
<dbReference type="PDB" id="6YII">
    <property type="method" value="X-ray"/>
    <property type="resolution" value="1.44 A"/>
    <property type="chains" value="A=1-514"/>
</dbReference>
<dbReference type="PDBsum" id="6YII"/>
<dbReference type="SMR" id="P0DV40"/>
<dbReference type="GeneID" id="78556795"/>
<dbReference type="GO" id="GO:0005737">
    <property type="term" value="C:cytoplasm"/>
    <property type="evidence" value="ECO:0007669"/>
    <property type="project" value="UniProtKB-SubCell"/>
</dbReference>
<dbReference type="GO" id="GO:0004016">
    <property type="term" value="F:adenylate cyclase activity"/>
    <property type="evidence" value="ECO:0007669"/>
    <property type="project" value="UniProtKB-ARBA"/>
</dbReference>
<dbReference type="GO" id="GO:0046872">
    <property type="term" value="F:metal ion binding"/>
    <property type="evidence" value="ECO:0007669"/>
    <property type="project" value="UniProtKB-KW"/>
</dbReference>
<dbReference type="GO" id="GO:0000166">
    <property type="term" value="F:nucleotide binding"/>
    <property type="evidence" value="ECO:0007669"/>
    <property type="project" value="UniProtKB-KW"/>
</dbReference>
<dbReference type="GO" id="GO:0009190">
    <property type="term" value="P:cyclic nucleotide biosynthetic process"/>
    <property type="evidence" value="ECO:0007669"/>
    <property type="project" value="InterPro"/>
</dbReference>
<dbReference type="GO" id="GO:0051607">
    <property type="term" value="P:defense response to virus"/>
    <property type="evidence" value="ECO:0007669"/>
    <property type="project" value="UniProtKB-KW"/>
</dbReference>
<dbReference type="GO" id="GO:0035556">
    <property type="term" value="P:intracellular signal transduction"/>
    <property type="evidence" value="ECO:0007669"/>
    <property type="project" value="InterPro"/>
</dbReference>
<dbReference type="Gene3D" id="3.30.70.1230">
    <property type="entry name" value="Nucleotide cyclase"/>
    <property type="match status" value="2"/>
</dbReference>
<dbReference type="InterPro" id="IPR001054">
    <property type="entry name" value="A/G_cyclase"/>
</dbReference>
<dbReference type="InterPro" id="IPR029787">
    <property type="entry name" value="Nucleotide_cyclase"/>
</dbReference>
<dbReference type="SUPFAM" id="SSF55073">
    <property type="entry name" value="Nucleotide cyclase"/>
    <property type="match status" value="2"/>
</dbReference>
<dbReference type="PROSITE" id="PS50125">
    <property type="entry name" value="GUANYLATE_CYCLASE_2"/>
    <property type="match status" value="2"/>
</dbReference>
<sequence length="514" mass="56580">MSKSWNHDRAAKHIDQKIADVEEITIKDYVRDMSLESIPTSTAYRVDGVHMYADIMNLEDMLNITAVEGTECHKRTLRFLDQHYRAVKRILNKVDARRVDFHSQRLHSLFTKPYNTESGAETKRVQRAVATAQLIIDVLAETGDDDEQIPAAKVRIGIDTGLALAVNNGRSGYREPLFLGDPANHAAKLASNNKARGIYLTNNARKAIGLAESDEPEKSALTAIEIKACQDAAKLDVTSDEIVEEWREDLKKNPIGGYQFSRQTPPLRDMDIYSLTPANSKRQEMVSLYADIDGFTAYVADHINEKTDDVVRTLHVIRSELERVVTSDFEGRRVRFIGDCVQALSCDGTAHTTDEEKSVSEATRLAGALRSSFNLAIERLNAEGIETGDLGLAIGFDLGPIAVTRLGAKGNRVRCAIGRSVIESEKRQCACSGVETAIGQVAYDAASKAVQNLFGKSRKTSHLDYNEATEALADDGDASAKQARSEAYAGSAAIIRADERQVQPHSRQKVDGSR</sequence>
<accession>P0DV40</accession>
<evidence type="ECO:0000255" key="1">
    <source>
        <dbReference type="PROSITE-ProRule" id="PRU00099"/>
    </source>
</evidence>
<evidence type="ECO:0000256" key="2">
    <source>
        <dbReference type="SAM" id="MobiDB-lite"/>
    </source>
</evidence>
<evidence type="ECO:0000269" key="3">
    <source>
    </source>
</evidence>
<evidence type="ECO:0000269" key="4">
    <source>
    </source>
</evidence>
<evidence type="ECO:0000303" key="5">
    <source>
    </source>
</evidence>
<evidence type="ECO:0000303" key="6">
    <source>
    </source>
</evidence>
<evidence type="ECO:0000305" key="7"/>
<evidence type="ECO:0000305" key="8">
    <source>
    </source>
</evidence>
<evidence type="ECO:0000305" key="9">
    <source>
    </source>
</evidence>
<evidence type="ECO:0007744" key="10">
    <source>
        <dbReference type="PDB" id="6YII"/>
    </source>
</evidence>
<evidence type="ECO:0007829" key="11">
    <source>
        <dbReference type="PDB" id="6YII"/>
    </source>
</evidence>